<reference key="1">
    <citation type="journal article" date="2000" name="Nature">
        <title>Ancestral chloroplast genome in Mesostigma viride reveals an early branch of green plant evolution.</title>
        <authorList>
            <person name="Lemieux C."/>
            <person name="Otis C."/>
            <person name="Turmel M."/>
        </authorList>
    </citation>
    <scope>NUCLEOTIDE SEQUENCE [LARGE SCALE GENOMIC DNA]</scope>
    <source>
        <strain>NIES-296 / KY-14 / CCMP 2046</strain>
    </source>
</reference>
<accession>Q9MUS7</accession>
<gene>
    <name evidence="1" type="primary">rpoC2</name>
</gene>
<feature type="chain" id="PRO_0000067931" description="DNA-directed RNA polymerase subunit beta''">
    <location>
        <begin position="1"/>
        <end position="1223"/>
    </location>
</feature>
<feature type="binding site" evidence="1">
    <location>
        <position position="233"/>
    </location>
    <ligand>
        <name>Zn(2+)</name>
        <dbReference type="ChEBI" id="CHEBI:29105"/>
    </ligand>
</feature>
<feature type="binding site" evidence="1">
    <location>
        <position position="307"/>
    </location>
    <ligand>
        <name>Zn(2+)</name>
        <dbReference type="ChEBI" id="CHEBI:29105"/>
    </ligand>
</feature>
<feature type="binding site" evidence="1">
    <location>
        <position position="314"/>
    </location>
    <ligand>
        <name>Zn(2+)</name>
        <dbReference type="ChEBI" id="CHEBI:29105"/>
    </ligand>
</feature>
<feature type="binding site" evidence="1">
    <location>
        <position position="317"/>
    </location>
    <ligand>
        <name>Zn(2+)</name>
        <dbReference type="ChEBI" id="CHEBI:29105"/>
    </ligand>
</feature>
<evidence type="ECO:0000255" key="1">
    <source>
        <dbReference type="HAMAP-Rule" id="MF_01324"/>
    </source>
</evidence>
<protein>
    <recommendedName>
        <fullName evidence="1">DNA-directed RNA polymerase subunit beta''</fullName>
        <ecNumber evidence="1">2.7.7.6</ecNumber>
    </recommendedName>
    <alternativeName>
        <fullName evidence="1">PEP</fullName>
    </alternativeName>
    <alternativeName>
        <fullName evidence="1">Plastid-encoded RNA polymerase subunit beta''</fullName>
        <shortName evidence="1">RNA polymerase subunit beta''</shortName>
    </alternativeName>
</protein>
<organism>
    <name type="scientific">Mesostigma viride</name>
    <name type="common">Green alga</name>
    <dbReference type="NCBI Taxonomy" id="41882"/>
    <lineage>
        <taxon>Eukaryota</taxon>
        <taxon>Viridiplantae</taxon>
        <taxon>Streptophyta</taxon>
        <taxon>Mesostigmatophyceae</taxon>
        <taxon>Mesostigmatales</taxon>
        <taxon>Mesostigmataceae</taxon>
        <taxon>Mesostigma</taxon>
    </lineage>
</organism>
<name>RPOC2_MESVI</name>
<sequence>MGRMKKIFFNQKSDLNSMKLFFCNRIMNKGEIRRIIAWFLFNHGTSRTAHMVDRLKILGFYHATKAGISLSIDDLSIPPTKKWLLEDAEQEIAKTQKNYSIGKITAVERFQKVIDTWHSTSETLKNEVVQYFEQTNPLNPVYMMAFSGARGNLSQVSQLVGMRGLMSDPQGQIIDLPIRSNFREGLTVTEYVISCYGARKGLVDTALRTADSGYLTRRLVDVAQDMIIRETDCGTKSGILLGPVKDEQKVVFSLQERLIGRVLAENIYSPKQKQYIAKKNQDISASLSDKICEIKRTNILVRSPLTCKSIRSVCQLCYGWSLAHGNLVDLGEAVGIIAAQSIGEPGTQLTMRTFHTGGVFTGNIAKQIRSSIDGKIIYSLTNTIPMRTRHGEIALITQSNINICIQGKNKEFNIEVPINTILLVNNGSMVRAKQLIAEVSAPVNAQSVEIASKYVASDFSGEIHFENLLLQEKKSAYGHKMNRAGQYGGLLWILSGQVYKFSLDVPLMFDTADYIHNGSCMAEHNIISQYGGILQTSENNLTIDNSNSYLYVLNSSMTIINAYLSHIKNARSEAYILTDDLNQKFFMQVESNNVIKNNQIIAKFVTKTYLTNTGGILKYSSEIEVDEYDIVTQSYPVRKGGIIMWIPEETHLINKDASLLMVRDCEYVEAGTQIIKDLICHSSGLAQVSQTNDILREVVIKPGKIYRPIDFSQVLDKHQTLIQAGEEICDGIIAEELVYLENVNLSSGSALLIRPVVQFLIPNSTELKKLEAQYQLKQNISIQPSIHICYKDGQRIHAWQSMEIAKIFLRLEIDSHLHKLNVTLNLIENKLLQIKMFEYLMIDLNQIIDFQSYQNVTRLVRKFNNYIIPGTILAKTEIIAKDHGEVRQSNKNFEEQKSFLIMNEHDQMTLFVKNAYEFFQLGDLVHKGKEIVPGILAPQSGQVIQLQANRVTLRLARPYLVSSEAVLYVDDGDFVKSGDTLVMLIFEQSKTGDIVQGLPRIEELLEARRTKGLKPLPNNLHDLLQSFFDEATEKYGIQKAAKKSFEKLQLFLVNEVQSVYKAQGVHISDKHIEVIVRQMTSKVMIEEGGDTTLLPGELIELHRIENMNRNVSVHAKYKPIVLGITKASLNTESFISAASFQETTRVLTKAAIEGKTDWLRGLKENVIIGRLIPAGTGFNVHDKMYSRDLSLSNSYNLAYSSNSQHKRIEQKNAEYNFEDIIFD</sequence>
<geneLocation type="chloroplast"/>
<dbReference type="EC" id="2.7.7.6" evidence="1"/>
<dbReference type="EMBL" id="AF166114">
    <property type="protein sequence ID" value="AAF43824.1"/>
    <property type="molecule type" value="Genomic_DNA"/>
</dbReference>
<dbReference type="RefSeq" id="NP_038383.1">
    <property type="nucleotide sequence ID" value="NC_002186.1"/>
</dbReference>
<dbReference type="SMR" id="Q9MUS7"/>
<dbReference type="GeneID" id="800897"/>
<dbReference type="GO" id="GO:0009507">
    <property type="term" value="C:chloroplast"/>
    <property type="evidence" value="ECO:0007669"/>
    <property type="project" value="UniProtKB-SubCell"/>
</dbReference>
<dbReference type="GO" id="GO:0000428">
    <property type="term" value="C:DNA-directed RNA polymerase complex"/>
    <property type="evidence" value="ECO:0007669"/>
    <property type="project" value="UniProtKB-KW"/>
</dbReference>
<dbReference type="GO" id="GO:0005739">
    <property type="term" value="C:mitochondrion"/>
    <property type="evidence" value="ECO:0007669"/>
    <property type="project" value="GOC"/>
</dbReference>
<dbReference type="GO" id="GO:0003677">
    <property type="term" value="F:DNA binding"/>
    <property type="evidence" value="ECO:0007669"/>
    <property type="project" value="UniProtKB-UniRule"/>
</dbReference>
<dbReference type="GO" id="GO:0003899">
    <property type="term" value="F:DNA-directed RNA polymerase activity"/>
    <property type="evidence" value="ECO:0007669"/>
    <property type="project" value="UniProtKB-UniRule"/>
</dbReference>
<dbReference type="GO" id="GO:0008270">
    <property type="term" value="F:zinc ion binding"/>
    <property type="evidence" value="ECO:0007669"/>
    <property type="project" value="UniProtKB-UniRule"/>
</dbReference>
<dbReference type="GO" id="GO:0006351">
    <property type="term" value="P:DNA-templated transcription"/>
    <property type="evidence" value="ECO:0007669"/>
    <property type="project" value="UniProtKB-UniRule"/>
</dbReference>
<dbReference type="CDD" id="cd02655">
    <property type="entry name" value="RNAP_beta'_C"/>
    <property type="match status" value="1"/>
</dbReference>
<dbReference type="FunFam" id="1.10.150.390:FF:000002">
    <property type="entry name" value="DNA-directed RNA polymerase subunit beta"/>
    <property type="match status" value="1"/>
</dbReference>
<dbReference type="Gene3D" id="1.10.132.30">
    <property type="match status" value="1"/>
</dbReference>
<dbReference type="Gene3D" id="1.10.150.390">
    <property type="match status" value="1"/>
</dbReference>
<dbReference type="Gene3D" id="1.10.1790.20">
    <property type="match status" value="1"/>
</dbReference>
<dbReference type="Gene3D" id="1.10.274.100">
    <property type="entry name" value="RNA polymerase Rpb1, domain 3"/>
    <property type="match status" value="1"/>
</dbReference>
<dbReference type="HAMAP" id="MF_01324">
    <property type="entry name" value="RNApol_bact_RpoC2"/>
    <property type="match status" value="1"/>
</dbReference>
<dbReference type="InterPro" id="IPR012756">
    <property type="entry name" value="DNA-dir_RpoC2_beta_pp"/>
</dbReference>
<dbReference type="InterPro" id="IPR045867">
    <property type="entry name" value="DNA-dir_RpoC_beta_prime"/>
</dbReference>
<dbReference type="InterPro" id="IPR042102">
    <property type="entry name" value="RNA_pol_Rpb1_3_sf"/>
</dbReference>
<dbReference type="InterPro" id="IPR007083">
    <property type="entry name" value="RNA_pol_Rpb1_4"/>
</dbReference>
<dbReference type="InterPro" id="IPR007081">
    <property type="entry name" value="RNA_pol_Rpb1_5"/>
</dbReference>
<dbReference type="InterPro" id="IPR038120">
    <property type="entry name" value="Rpb1_funnel_sf"/>
</dbReference>
<dbReference type="NCBIfam" id="TIGR02388">
    <property type="entry name" value="rpoC2_cyan"/>
    <property type="match status" value="1"/>
</dbReference>
<dbReference type="PANTHER" id="PTHR19376">
    <property type="entry name" value="DNA-DIRECTED RNA POLYMERASE"/>
    <property type="match status" value="1"/>
</dbReference>
<dbReference type="PANTHER" id="PTHR19376:SF68">
    <property type="entry name" value="DNA-DIRECTED RNA POLYMERASE SUBUNIT BETA"/>
    <property type="match status" value="1"/>
</dbReference>
<dbReference type="Pfam" id="PF05000">
    <property type="entry name" value="RNA_pol_Rpb1_4"/>
    <property type="match status" value="1"/>
</dbReference>
<dbReference type="Pfam" id="PF04998">
    <property type="entry name" value="RNA_pol_Rpb1_5"/>
    <property type="match status" value="2"/>
</dbReference>
<dbReference type="SUPFAM" id="SSF64484">
    <property type="entry name" value="beta and beta-prime subunits of DNA dependent RNA-polymerase"/>
    <property type="match status" value="1"/>
</dbReference>
<proteinExistence type="inferred from homology"/>
<keyword id="KW-0150">Chloroplast</keyword>
<keyword id="KW-0240">DNA-directed RNA polymerase</keyword>
<keyword id="KW-0479">Metal-binding</keyword>
<keyword id="KW-0548">Nucleotidyltransferase</keyword>
<keyword id="KW-0934">Plastid</keyword>
<keyword id="KW-0804">Transcription</keyword>
<keyword id="KW-0808">Transferase</keyword>
<keyword id="KW-0862">Zinc</keyword>
<comment type="function">
    <text evidence="1">DNA-dependent RNA polymerase catalyzes the transcription of DNA into RNA using the four ribonucleoside triphosphates as substrates.</text>
</comment>
<comment type="catalytic activity">
    <reaction evidence="1">
        <text>RNA(n) + a ribonucleoside 5'-triphosphate = RNA(n+1) + diphosphate</text>
        <dbReference type="Rhea" id="RHEA:21248"/>
        <dbReference type="Rhea" id="RHEA-COMP:14527"/>
        <dbReference type="Rhea" id="RHEA-COMP:17342"/>
        <dbReference type="ChEBI" id="CHEBI:33019"/>
        <dbReference type="ChEBI" id="CHEBI:61557"/>
        <dbReference type="ChEBI" id="CHEBI:140395"/>
        <dbReference type="EC" id="2.7.7.6"/>
    </reaction>
</comment>
<comment type="cofactor">
    <cofactor evidence="1">
        <name>Zn(2+)</name>
        <dbReference type="ChEBI" id="CHEBI:29105"/>
    </cofactor>
    <text evidence="1">Binds 1 Zn(2+) ion per subunit.</text>
</comment>
<comment type="subunit">
    <text evidence="1">In plastids the minimal PEP RNA polymerase catalytic core is composed of four subunits: alpha, beta, beta', and beta''. When a (nuclear-encoded) sigma factor is associated with the core the holoenzyme is formed, which can initiate transcription.</text>
</comment>
<comment type="subcellular location">
    <subcellularLocation>
        <location evidence="1">Plastid</location>
        <location evidence="1">Chloroplast</location>
    </subcellularLocation>
</comment>
<comment type="similarity">
    <text evidence="1">Belongs to the RNA polymerase beta' chain family. RpoC2 subfamily.</text>
</comment>